<dbReference type="EMBL" id="CU928145">
    <property type="protein sequence ID" value="CAU95903.1"/>
    <property type="molecule type" value="Genomic_DNA"/>
</dbReference>
<dbReference type="RefSeq" id="WP_001118464.1">
    <property type="nucleotide sequence ID" value="NZ_CP028304.1"/>
</dbReference>
<dbReference type="SMR" id="B7L4D9"/>
<dbReference type="GeneID" id="93777428"/>
<dbReference type="KEGG" id="eck:EC55989_0015"/>
<dbReference type="HOGENOM" id="CLU_017633_0_7_6"/>
<dbReference type="Proteomes" id="UP000000746">
    <property type="component" value="Chromosome"/>
</dbReference>
<dbReference type="GO" id="GO:0005737">
    <property type="term" value="C:cytoplasm"/>
    <property type="evidence" value="ECO:0007669"/>
    <property type="project" value="UniProtKB-SubCell"/>
</dbReference>
<dbReference type="GO" id="GO:0005524">
    <property type="term" value="F:ATP binding"/>
    <property type="evidence" value="ECO:0007669"/>
    <property type="project" value="InterPro"/>
</dbReference>
<dbReference type="GO" id="GO:0031072">
    <property type="term" value="F:heat shock protein binding"/>
    <property type="evidence" value="ECO:0007669"/>
    <property type="project" value="InterPro"/>
</dbReference>
<dbReference type="GO" id="GO:0051082">
    <property type="term" value="F:unfolded protein binding"/>
    <property type="evidence" value="ECO:0007669"/>
    <property type="project" value="UniProtKB-UniRule"/>
</dbReference>
<dbReference type="GO" id="GO:0008270">
    <property type="term" value="F:zinc ion binding"/>
    <property type="evidence" value="ECO:0007669"/>
    <property type="project" value="UniProtKB-UniRule"/>
</dbReference>
<dbReference type="GO" id="GO:0051085">
    <property type="term" value="P:chaperone cofactor-dependent protein refolding"/>
    <property type="evidence" value="ECO:0007669"/>
    <property type="project" value="TreeGrafter"/>
</dbReference>
<dbReference type="GO" id="GO:0006260">
    <property type="term" value="P:DNA replication"/>
    <property type="evidence" value="ECO:0007669"/>
    <property type="project" value="UniProtKB-KW"/>
</dbReference>
<dbReference type="GO" id="GO:0042026">
    <property type="term" value="P:protein refolding"/>
    <property type="evidence" value="ECO:0007669"/>
    <property type="project" value="TreeGrafter"/>
</dbReference>
<dbReference type="GO" id="GO:0009408">
    <property type="term" value="P:response to heat"/>
    <property type="evidence" value="ECO:0007669"/>
    <property type="project" value="InterPro"/>
</dbReference>
<dbReference type="CDD" id="cd06257">
    <property type="entry name" value="DnaJ"/>
    <property type="match status" value="1"/>
</dbReference>
<dbReference type="CDD" id="cd10747">
    <property type="entry name" value="DnaJ_C"/>
    <property type="match status" value="1"/>
</dbReference>
<dbReference type="CDD" id="cd10719">
    <property type="entry name" value="DnaJ_zf"/>
    <property type="match status" value="1"/>
</dbReference>
<dbReference type="FunFam" id="1.10.287.110:FF:000003">
    <property type="entry name" value="Molecular chaperone DnaJ"/>
    <property type="match status" value="1"/>
</dbReference>
<dbReference type="FunFam" id="2.10.230.10:FF:000002">
    <property type="entry name" value="Molecular chaperone DnaJ"/>
    <property type="match status" value="1"/>
</dbReference>
<dbReference type="FunFam" id="2.60.260.20:FF:000004">
    <property type="entry name" value="Molecular chaperone DnaJ"/>
    <property type="match status" value="1"/>
</dbReference>
<dbReference type="Gene3D" id="1.10.287.110">
    <property type="entry name" value="DnaJ domain"/>
    <property type="match status" value="1"/>
</dbReference>
<dbReference type="Gene3D" id="2.10.230.10">
    <property type="entry name" value="Heat shock protein DnaJ, cysteine-rich domain"/>
    <property type="match status" value="1"/>
</dbReference>
<dbReference type="Gene3D" id="2.60.260.20">
    <property type="entry name" value="Urease metallochaperone UreE, N-terminal domain"/>
    <property type="match status" value="2"/>
</dbReference>
<dbReference type="HAMAP" id="MF_01152">
    <property type="entry name" value="DnaJ"/>
    <property type="match status" value="1"/>
</dbReference>
<dbReference type="InterPro" id="IPR012724">
    <property type="entry name" value="DnaJ"/>
</dbReference>
<dbReference type="InterPro" id="IPR002939">
    <property type="entry name" value="DnaJ_C"/>
</dbReference>
<dbReference type="InterPro" id="IPR001623">
    <property type="entry name" value="DnaJ_domain"/>
</dbReference>
<dbReference type="InterPro" id="IPR018253">
    <property type="entry name" value="DnaJ_domain_CS"/>
</dbReference>
<dbReference type="InterPro" id="IPR008971">
    <property type="entry name" value="HSP40/DnaJ_pept-bd"/>
</dbReference>
<dbReference type="InterPro" id="IPR001305">
    <property type="entry name" value="HSP_DnaJ_Cys-rich_dom"/>
</dbReference>
<dbReference type="InterPro" id="IPR036410">
    <property type="entry name" value="HSP_DnaJ_Cys-rich_dom_sf"/>
</dbReference>
<dbReference type="InterPro" id="IPR036869">
    <property type="entry name" value="J_dom_sf"/>
</dbReference>
<dbReference type="NCBIfam" id="TIGR02349">
    <property type="entry name" value="DnaJ_bact"/>
    <property type="match status" value="1"/>
</dbReference>
<dbReference type="NCBIfam" id="NF008035">
    <property type="entry name" value="PRK10767.1"/>
    <property type="match status" value="1"/>
</dbReference>
<dbReference type="PANTHER" id="PTHR43096:SF48">
    <property type="entry name" value="CHAPERONE PROTEIN DNAJ"/>
    <property type="match status" value="1"/>
</dbReference>
<dbReference type="PANTHER" id="PTHR43096">
    <property type="entry name" value="DNAJ HOMOLOG 1, MITOCHONDRIAL-RELATED"/>
    <property type="match status" value="1"/>
</dbReference>
<dbReference type="Pfam" id="PF00226">
    <property type="entry name" value="DnaJ"/>
    <property type="match status" value="1"/>
</dbReference>
<dbReference type="Pfam" id="PF01556">
    <property type="entry name" value="DnaJ_C"/>
    <property type="match status" value="1"/>
</dbReference>
<dbReference type="Pfam" id="PF00684">
    <property type="entry name" value="DnaJ_CXXCXGXG"/>
    <property type="match status" value="1"/>
</dbReference>
<dbReference type="PRINTS" id="PR00625">
    <property type="entry name" value="JDOMAIN"/>
</dbReference>
<dbReference type="SMART" id="SM00271">
    <property type="entry name" value="DnaJ"/>
    <property type="match status" value="1"/>
</dbReference>
<dbReference type="SUPFAM" id="SSF46565">
    <property type="entry name" value="Chaperone J-domain"/>
    <property type="match status" value="1"/>
</dbReference>
<dbReference type="SUPFAM" id="SSF57938">
    <property type="entry name" value="DnaJ/Hsp40 cysteine-rich domain"/>
    <property type="match status" value="1"/>
</dbReference>
<dbReference type="SUPFAM" id="SSF49493">
    <property type="entry name" value="HSP40/DnaJ peptide-binding domain"/>
    <property type="match status" value="2"/>
</dbReference>
<dbReference type="PROSITE" id="PS00636">
    <property type="entry name" value="DNAJ_1"/>
    <property type="match status" value="1"/>
</dbReference>
<dbReference type="PROSITE" id="PS50076">
    <property type="entry name" value="DNAJ_2"/>
    <property type="match status" value="1"/>
</dbReference>
<dbReference type="PROSITE" id="PS51188">
    <property type="entry name" value="ZF_CR"/>
    <property type="match status" value="1"/>
</dbReference>
<name>DNAJ_ECO55</name>
<proteinExistence type="inferred from homology"/>
<organism>
    <name type="scientific">Escherichia coli (strain 55989 / EAEC)</name>
    <dbReference type="NCBI Taxonomy" id="585055"/>
    <lineage>
        <taxon>Bacteria</taxon>
        <taxon>Pseudomonadati</taxon>
        <taxon>Pseudomonadota</taxon>
        <taxon>Gammaproteobacteria</taxon>
        <taxon>Enterobacterales</taxon>
        <taxon>Enterobacteriaceae</taxon>
        <taxon>Escherichia</taxon>
    </lineage>
</organism>
<reference key="1">
    <citation type="journal article" date="2009" name="PLoS Genet.">
        <title>Organised genome dynamics in the Escherichia coli species results in highly diverse adaptive paths.</title>
        <authorList>
            <person name="Touchon M."/>
            <person name="Hoede C."/>
            <person name="Tenaillon O."/>
            <person name="Barbe V."/>
            <person name="Baeriswyl S."/>
            <person name="Bidet P."/>
            <person name="Bingen E."/>
            <person name="Bonacorsi S."/>
            <person name="Bouchier C."/>
            <person name="Bouvet O."/>
            <person name="Calteau A."/>
            <person name="Chiapello H."/>
            <person name="Clermont O."/>
            <person name="Cruveiller S."/>
            <person name="Danchin A."/>
            <person name="Diard M."/>
            <person name="Dossat C."/>
            <person name="Karoui M.E."/>
            <person name="Frapy E."/>
            <person name="Garry L."/>
            <person name="Ghigo J.M."/>
            <person name="Gilles A.M."/>
            <person name="Johnson J."/>
            <person name="Le Bouguenec C."/>
            <person name="Lescat M."/>
            <person name="Mangenot S."/>
            <person name="Martinez-Jehanne V."/>
            <person name="Matic I."/>
            <person name="Nassif X."/>
            <person name="Oztas S."/>
            <person name="Petit M.A."/>
            <person name="Pichon C."/>
            <person name="Rouy Z."/>
            <person name="Ruf C.S."/>
            <person name="Schneider D."/>
            <person name="Tourret J."/>
            <person name="Vacherie B."/>
            <person name="Vallenet D."/>
            <person name="Medigue C."/>
            <person name="Rocha E.P.C."/>
            <person name="Denamur E."/>
        </authorList>
    </citation>
    <scope>NUCLEOTIDE SEQUENCE [LARGE SCALE GENOMIC DNA]</scope>
    <source>
        <strain>55989 / EAEC</strain>
    </source>
</reference>
<feature type="chain" id="PRO_1000164260" description="Chaperone protein DnaJ">
    <location>
        <begin position="1"/>
        <end position="376"/>
    </location>
</feature>
<feature type="domain" description="J" evidence="1">
    <location>
        <begin position="5"/>
        <end position="70"/>
    </location>
</feature>
<feature type="repeat" description="CXXCXGXG motif">
    <location>
        <begin position="144"/>
        <end position="151"/>
    </location>
</feature>
<feature type="repeat" description="CXXCXGXG motif">
    <location>
        <begin position="161"/>
        <end position="168"/>
    </location>
</feature>
<feature type="repeat" description="CXXCXGXG motif">
    <location>
        <begin position="183"/>
        <end position="190"/>
    </location>
</feature>
<feature type="repeat" description="CXXCXGXG motif">
    <location>
        <begin position="197"/>
        <end position="204"/>
    </location>
</feature>
<feature type="zinc finger region" description="CR-type" evidence="1">
    <location>
        <begin position="131"/>
        <end position="209"/>
    </location>
</feature>
<feature type="binding site" evidence="1">
    <location>
        <position position="144"/>
    </location>
    <ligand>
        <name>Zn(2+)</name>
        <dbReference type="ChEBI" id="CHEBI:29105"/>
        <label>1</label>
    </ligand>
</feature>
<feature type="binding site" evidence="1">
    <location>
        <position position="147"/>
    </location>
    <ligand>
        <name>Zn(2+)</name>
        <dbReference type="ChEBI" id="CHEBI:29105"/>
        <label>1</label>
    </ligand>
</feature>
<feature type="binding site" evidence="1">
    <location>
        <position position="161"/>
    </location>
    <ligand>
        <name>Zn(2+)</name>
        <dbReference type="ChEBI" id="CHEBI:29105"/>
        <label>2</label>
    </ligand>
</feature>
<feature type="binding site" evidence="1">
    <location>
        <position position="164"/>
    </location>
    <ligand>
        <name>Zn(2+)</name>
        <dbReference type="ChEBI" id="CHEBI:29105"/>
        <label>2</label>
    </ligand>
</feature>
<feature type="binding site" evidence="1">
    <location>
        <position position="183"/>
    </location>
    <ligand>
        <name>Zn(2+)</name>
        <dbReference type="ChEBI" id="CHEBI:29105"/>
        <label>2</label>
    </ligand>
</feature>
<feature type="binding site" evidence="1">
    <location>
        <position position="186"/>
    </location>
    <ligand>
        <name>Zn(2+)</name>
        <dbReference type="ChEBI" id="CHEBI:29105"/>
        <label>2</label>
    </ligand>
</feature>
<feature type="binding site" evidence="1">
    <location>
        <position position="197"/>
    </location>
    <ligand>
        <name>Zn(2+)</name>
        <dbReference type="ChEBI" id="CHEBI:29105"/>
        <label>1</label>
    </ligand>
</feature>
<feature type="binding site" evidence="1">
    <location>
        <position position="200"/>
    </location>
    <ligand>
        <name>Zn(2+)</name>
        <dbReference type="ChEBI" id="CHEBI:29105"/>
        <label>1</label>
    </ligand>
</feature>
<comment type="function">
    <text evidence="1">Participates actively in the response to hyperosmotic and heat shock by preventing the aggregation of stress-denatured proteins and by disaggregating proteins, also in an autonomous, DnaK-independent fashion. Unfolded proteins bind initially to DnaJ; upon interaction with the DnaJ-bound protein, DnaK hydrolyzes its bound ATP, resulting in the formation of a stable complex. GrpE releases ADP from DnaK; ATP binding to DnaK triggers the release of the substrate protein, thus completing the reaction cycle. Several rounds of ATP-dependent interactions between DnaJ, DnaK and GrpE are required for fully efficient folding. Also involved, together with DnaK and GrpE, in the DNA replication of plasmids through activation of initiation proteins.</text>
</comment>
<comment type="cofactor">
    <cofactor evidence="1">
        <name>Zn(2+)</name>
        <dbReference type="ChEBI" id="CHEBI:29105"/>
    </cofactor>
    <text evidence="1">Binds 2 Zn(2+) ions per monomer.</text>
</comment>
<comment type="subunit">
    <text evidence="1">Homodimer.</text>
</comment>
<comment type="subcellular location">
    <subcellularLocation>
        <location evidence="1">Cytoplasm</location>
    </subcellularLocation>
</comment>
<comment type="domain">
    <text evidence="1">The J domain is necessary and sufficient to stimulate DnaK ATPase activity. Zinc center 1 plays an important role in the autonomous, DnaK-independent chaperone activity of DnaJ. Zinc center 2 is essential for interaction with DnaK and for DnaJ activity.</text>
</comment>
<comment type="similarity">
    <text evidence="1">Belongs to the DnaJ family.</text>
</comment>
<accession>B7L4D9</accession>
<evidence type="ECO:0000255" key="1">
    <source>
        <dbReference type="HAMAP-Rule" id="MF_01152"/>
    </source>
</evidence>
<protein>
    <recommendedName>
        <fullName evidence="1">Chaperone protein DnaJ</fullName>
    </recommendedName>
</protein>
<keyword id="KW-0143">Chaperone</keyword>
<keyword id="KW-0963">Cytoplasm</keyword>
<keyword id="KW-0235">DNA replication</keyword>
<keyword id="KW-0479">Metal-binding</keyword>
<keyword id="KW-1185">Reference proteome</keyword>
<keyword id="KW-0677">Repeat</keyword>
<keyword id="KW-0346">Stress response</keyword>
<keyword id="KW-0862">Zinc</keyword>
<keyword id="KW-0863">Zinc-finger</keyword>
<gene>
    <name evidence="1" type="primary">dnaJ</name>
    <name type="ordered locus">EC55989_0015</name>
</gene>
<sequence length="376" mass="41044">MAKQDYYEILGVSKTAEEREIKKAYKRLAMKYHPDRNQGDKEAEAKFKEIKEAYEVLTDSQKRAAYDQYGHAAFEQGGMGGGGFGGGADFSDIFGDVFGDIFGGGRGRQRAARGADLRYNMELTLEEAVRGVTKEIRIPTLEECDVCHGSGAKPGTQPQTCPTCHGSGQVQMRQGFFAVQQTCPHCQGRGTLIKDPCNKCHGHGRVERSKTLSVKIPAGVDTGDRIRLAGEGEAGEHGAPAGDLYVQVQVKQHPIFEREGNNLYCEVPINFAMAALGGEIEVPTLDGRVKLKVPGETQTGKLFRMRGKGVKSVRGGAQGDLLCRVVVETPVGLNEKQKQLLQELQESFGGPTGEHNSPRSKSFFDGVKKFFDDLTR</sequence>